<feature type="chain" id="PRO_0000379810" description="Putative hydro-lyase ABSDF2257">
    <location>
        <begin position="1"/>
        <end position="268"/>
    </location>
</feature>
<sequence length="268" mass="29595">MYKDIKVDPAQLEAALDARLKIRAGFDKPTAGMAAGMTQVNMISVPRDWAYDFLLYAHRNPQSCPVLDVLEEGIYATKLAADSDIRTDFPRYRIWKDGEMVDEVTDAREIYNAHPDLVTFLIGCSFSFETALQEAGIEVRHIHDDTNVPMYLSNIKCEPAGRISGNMVVSMRPIPSHQISEAVKITARMPSVHGAPVHIGHPESLGIKDVNKPDFGDASRIEAGEIPVFWACGVTPQAAVINSKIPFAISHAPGYMFITDIPDRAWMG</sequence>
<organism>
    <name type="scientific">Acinetobacter baumannii (strain SDF)</name>
    <dbReference type="NCBI Taxonomy" id="509170"/>
    <lineage>
        <taxon>Bacteria</taxon>
        <taxon>Pseudomonadati</taxon>
        <taxon>Pseudomonadota</taxon>
        <taxon>Gammaproteobacteria</taxon>
        <taxon>Moraxellales</taxon>
        <taxon>Moraxellaceae</taxon>
        <taxon>Acinetobacter</taxon>
        <taxon>Acinetobacter calcoaceticus/baumannii complex</taxon>
    </lineage>
</organism>
<accession>B0VRR2</accession>
<comment type="similarity">
    <text evidence="1">Belongs to the D-glutamate cyclase family.</text>
</comment>
<dbReference type="EC" id="4.2.1.-" evidence="1"/>
<dbReference type="EMBL" id="CU468230">
    <property type="protein sequence ID" value="CAP01580.1"/>
    <property type="molecule type" value="Genomic_DNA"/>
</dbReference>
<dbReference type="SMR" id="B0VRR2"/>
<dbReference type="KEGG" id="abm:ABSDF2257"/>
<dbReference type="HOGENOM" id="CLU_059759_0_0_6"/>
<dbReference type="BioCyc" id="ABAU509170:GCL9-1847-MONOMER"/>
<dbReference type="Proteomes" id="UP000001741">
    <property type="component" value="Chromosome"/>
</dbReference>
<dbReference type="GO" id="GO:0016829">
    <property type="term" value="F:lyase activity"/>
    <property type="evidence" value="ECO:0007669"/>
    <property type="project" value="UniProtKB-KW"/>
</dbReference>
<dbReference type="FunFam" id="3.30.2040.10:FF:000001">
    <property type="entry name" value="D-glutamate cyclase, mitochondrial"/>
    <property type="match status" value="1"/>
</dbReference>
<dbReference type="Gene3D" id="3.40.1640.10">
    <property type="entry name" value="PSTPO5379-like"/>
    <property type="match status" value="1"/>
</dbReference>
<dbReference type="Gene3D" id="3.30.2040.10">
    <property type="entry name" value="PSTPO5379-like domain"/>
    <property type="match status" value="1"/>
</dbReference>
<dbReference type="HAMAP" id="MF_01830">
    <property type="entry name" value="Hydro_lyase"/>
    <property type="match status" value="1"/>
</dbReference>
<dbReference type="InterPro" id="IPR009906">
    <property type="entry name" value="D-Glu_cyclase"/>
</dbReference>
<dbReference type="InterPro" id="IPR038021">
    <property type="entry name" value="Putative_hydro-lyase"/>
</dbReference>
<dbReference type="InterPro" id="IPR016938">
    <property type="entry name" value="UPF0317"/>
</dbReference>
<dbReference type="NCBIfam" id="NF003969">
    <property type="entry name" value="PRK05463.1"/>
    <property type="match status" value="1"/>
</dbReference>
<dbReference type="PANTHER" id="PTHR32022">
    <property type="entry name" value="D-GLUTAMATE CYCLASE, MITOCHONDRIAL"/>
    <property type="match status" value="1"/>
</dbReference>
<dbReference type="PANTHER" id="PTHR32022:SF10">
    <property type="entry name" value="D-GLUTAMATE CYCLASE, MITOCHONDRIAL"/>
    <property type="match status" value="1"/>
</dbReference>
<dbReference type="Pfam" id="PF07286">
    <property type="entry name" value="D-Glu_cyclase"/>
    <property type="match status" value="1"/>
</dbReference>
<dbReference type="PIRSF" id="PIRSF029755">
    <property type="entry name" value="UCP029755"/>
    <property type="match status" value="1"/>
</dbReference>
<dbReference type="SUPFAM" id="SSF160920">
    <property type="entry name" value="PSTPO5379-like"/>
    <property type="match status" value="1"/>
</dbReference>
<proteinExistence type="inferred from homology"/>
<evidence type="ECO:0000255" key="1">
    <source>
        <dbReference type="HAMAP-Rule" id="MF_01830"/>
    </source>
</evidence>
<gene>
    <name type="ordered locus">ABSDF2257</name>
</gene>
<name>Y2257_ACIBS</name>
<protein>
    <recommendedName>
        <fullName evidence="1">Putative hydro-lyase ABSDF2257</fullName>
        <ecNumber evidence="1">4.2.1.-</ecNumber>
    </recommendedName>
</protein>
<keyword id="KW-0456">Lyase</keyword>
<reference key="1">
    <citation type="journal article" date="2008" name="PLoS ONE">
        <title>Comparative analysis of Acinetobacters: three genomes for three lifestyles.</title>
        <authorList>
            <person name="Vallenet D."/>
            <person name="Nordmann P."/>
            <person name="Barbe V."/>
            <person name="Poirel L."/>
            <person name="Mangenot S."/>
            <person name="Bataille E."/>
            <person name="Dossat C."/>
            <person name="Gas S."/>
            <person name="Kreimeyer A."/>
            <person name="Lenoble P."/>
            <person name="Oztas S."/>
            <person name="Poulain J."/>
            <person name="Segurens B."/>
            <person name="Robert C."/>
            <person name="Abergel C."/>
            <person name="Claverie J.-M."/>
            <person name="Raoult D."/>
            <person name="Medigue C."/>
            <person name="Weissenbach J."/>
            <person name="Cruveiller S."/>
        </authorList>
    </citation>
    <scope>NUCLEOTIDE SEQUENCE [LARGE SCALE GENOMIC DNA]</scope>
    <source>
        <strain>SDF</strain>
    </source>
</reference>